<proteinExistence type="inferred from homology"/>
<sequence>MKAEILAVGTELLLGNIVNTNAQYISKRLADLGIEVYNQSVVGDNAERLREAYELAFKRADLVITTGGLGPTKDDLTKEVAFEYLGKEAKLHEESLRRIEDYFKKIDRPMVDSNKKQACFPEDAIIMPNNNGTAPGCIIEENKKILAVLPGPPREMKAMFEESLVPYLRKFQENVLHSKTLRILGVGESRVAEIVDDILENSTNPTVAPYAKDSEVTLRITAKAKTIEDAEKLIEPVEQEIRDRLGLSVYADGEVTLEEVLGKMLIDNNITIATAESCTGGLLAGRLVNYPGISSVFKEGMITYSNEAKMKRIKVKKDTLQKYGAVSSQTAAEMAEGVAKVTGSDIGISTTGIAGPDGGTKEKPVGLVYVGICIKGDVKTKELHLVGDRQRVRQHTVIRALEWLRRELIRKGIK</sequence>
<protein>
    <recommendedName>
        <fullName evidence="1">Putative competence-damage inducible protein</fullName>
    </recommendedName>
</protein>
<accession>A0PXD7</accession>
<reference key="1">
    <citation type="journal article" date="2006" name="Nat. Biotechnol.">
        <title>The genome and transcriptomes of the anti-tumor agent Clostridium novyi-NT.</title>
        <authorList>
            <person name="Bettegowda C."/>
            <person name="Huang X."/>
            <person name="Lin J."/>
            <person name="Cheong I."/>
            <person name="Kohli M."/>
            <person name="Szabo S.A."/>
            <person name="Zhang X."/>
            <person name="Diaz L.A. Jr."/>
            <person name="Velculescu V.E."/>
            <person name="Parmigiani G."/>
            <person name="Kinzler K.W."/>
            <person name="Vogelstein B."/>
            <person name="Zhou S."/>
        </authorList>
    </citation>
    <scope>NUCLEOTIDE SEQUENCE [LARGE SCALE GENOMIC DNA]</scope>
    <source>
        <strain>NT</strain>
    </source>
</reference>
<gene>
    <name evidence="1" type="primary">cinA</name>
    <name type="ordered locus">NT01CX_0942</name>
</gene>
<feature type="chain" id="PRO_1000058700" description="Putative competence-damage inducible protein">
    <location>
        <begin position="1"/>
        <end position="414"/>
    </location>
</feature>
<organism>
    <name type="scientific">Clostridium novyi (strain NT)</name>
    <dbReference type="NCBI Taxonomy" id="386415"/>
    <lineage>
        <taxon>Bacteria</taxon>
        <taxon>Bacillati</taxon>
        <taxon>Bacillota</taxon>
        <taxon>Clostridia</taxon>
        <taxon>Eubacteriales</taxon>
        <taxon>Clostridiaceae</taxon>
        <taxon>Clostridium</taxon>
    </lineage>
</organism>
<comment type="similarity">
    <text evidence="1">Belongs to the CinA family.</text>
</comment>
<dbReference type="EMBL" id="CP000382">
    <property type="protein sequence ID" value="ABK61247.1"/>
    <property type="molecule type" value="Genomic_DNA"/>
</dbReference>
<dbReference type="RefSeq" id="WP_011721060.1">
    <property type="nucleotide sequence ID" value="NC_008593.1"/>
</dbReference>
<dbReference type="SMR" id="A0PXD7"/>
<dbReference type="STRING" id="386415.NT01CX_0942"/>
<dbReference type="KEGG" id="cno:NT01CX_0942"/>
<dbReference type="PATRIC" id="fig|386415.7.peg.66"/>
<dbReference type="eggNOG" id="COG1058">
    <property type="taxonomic scope" value="Bacteria"/>
</dbReference>
<dbReference type="eggNOG" id="COG1546">
    <property type="taxonomic scope" value="Bacteria"/>
</dbReference>
<dbReference type="HOGENOM" id="CLU_030805_9_3_9"/>
<dbReference type="Proteomes" id="UP000008220">
    <property type="component" value="Chromosome"/>
</dbReference>
<dbReference type="CDD" id="cd00885">
    <property type="entry name" value="cinA"/>
    <property type="match status" value="1"/>
</dbReference>
<dbReference type="Gene3D" id="3.30.70.2860">
    <property type="match status" value="1"/>
</dbReference>
<dbReference type="Gene3D" id="3.90.950.20">
    <property type="entry name" value="CinA-like"/>
    <property type="match status" value="1"/>
</dbReference>
<dbReference type="Gene3D" id="3.40.980.10">
    <property type="entry name" value="MoaB/Mog-like domain"/>
    <property type="match status" value="1"/>
</dbReference>
<dbReference type="HAMAP" id="MF_00226_B">
    <property type="entry name" value="CinA_B"/>
    <property type="match status" value="1"/>
</dbReference>
<dbReference type="InterPro" id="IPR050101">
    <property type="entry name" value="CinA"/>
</dbReference>
<dbReference type="InterPro" id="IPR036653">
    <property type="entry name" value="CinA-like_C"/>
</dbReference>
<dbReference type="InterPro" id="IPR008136">
    <property type="entry name" value="CinA_C"/>
</dbReference>
<dbReference type="InterPro" id="IPR041424">
    <property type="entry name" value="CinA_KH"/>
</dbReference>
<dbReference type="InterPro" id="IPR008135">
    <property type="entry name" value="Competence-induced_CinA"/>
</dbReference>
<dbReference type="InterPro" id="IPR036425">
    <property type="entry name" value="MoaB/Mog-like_dom_sf"/>
</dbReference>
<dbReference type="InterPro" id="IPR001453">
    <property type="entry name" value="MoaB/Mog_dom"/>
</dbReference>
<dbReference type="NCBIfam" id="TIGR00200">
    <property type="entry name" value="cinA_nterm"/>
    <property type="match status" value="1"/>
</dbReference>
<dbReference type="NCBIfam" id="TIGR00177">
    <property type="entry name" value="molyb_syn"/>
    <property type="match status" value="1"/>
</dbReference>
<dbReference type="NCBIfam" id="TIGR00199">
    <property type="entry name" value="PncC_domain"/>
    <property type="match status" value="1"/>
</dbReference>
<dbReference type="NCBIfam" id="NF001813">
    <property type="entry name" value="PRK00549.1"/>
    <property type="match status" value="1"/>
</dbReference>
<dbReference type="PANTHER" id="PTHR13939">
    <property type="entry name" value="NICOTINAMIDE-NUCLEOTIDE AMIDOHYDROLASE PNCC"/>
    <property type="match status" value="1"/>
</dbReference>
<dbReference type="PANTHER" id="PTHR13939:SF0">
    <property type="entry name" value="NMN AMIDOHYDROLASE-LIKE PROTEIN YFAY"/>
    <property type="match status" value="1"/>
</dbReference>
<dbReference type="Pfam" id="PF02464">
    <property type="entry name" value="CinA"/>
    <property type="match status" value="1"/>
</dbReference>
<dbReference type="Pfam" id="PF18146">
    <property type="entry name" value="CinA_KH"/>
    <property type="match status" value="1"/>
</dbReference>
<dbReference type="Pfam" id="PF00994">
    <property type="entry name" value="MoCF_biosynth"/>
    <property type="match status" value="1"/>
</dbReference>
<dbReference type="PIRSF" id="PIRSF006728">
    <property type="entry name" value="CinA"/>
    <property type="match status" value="1"/>
</dbReference>
<dbReference type="SMART" id="SM00852">
    <property type="entry name" value="MoCF_biosynth"/>
    <property type="match status" value="1"/>
</dbReference>
<dbReference type="SUPFAM" id="SSF142433">
    <property type="entry name" value="CinA-like"/>
    <property type="match status" value="1"/>
</dbReference>
<dbReference type="SUPFAM" id="SSF53218">
    <property type="entry name" value="Molybdenum cofactor biosynthesis proteins"/>
    <property type="match status" value="1"/>
</dbReference>
<evidence type="ECO:0000255" key="1">
    <source>
        <dbReference type="HAMAP-Rule" id="MF_00226"/>
    </source>
</evidence>
<keyword id="KW-1185">Reference proteome</keyword>
<name>CINA_CLONN</name>